<feature type="chain" id="PRO_0000298748" description="UPF0346 protein PEPE_1063">
    <location>
        <begin position="1"/>
        <end position="74"/>
    </location>
</feature>
<protein>
    <recommendedName>
        <fullName evidence="1">UPF0346 protein PEPE_1063</fullName>
    </recommendedName>
</protein>
<evidence type="ECO:0000255" key="1">
    <source>
        <dbReference type="HAMAP-Rule" id="MF_01538"/>
    </source>
</evidence>
<accession>Q03FA3</accession>
<proteinExistence type="inferred from homology"/>
<dbReference type="EMBL" id="CP000422">
    <property type="protein sequence ID" value="ABJ68119.1"/>
    <property type="molecule type" value="Genomic_DNA"/>
</dbReference>
<dbReference type="RefSeq" id="WP_002833189.1">
    <property type="nucleotide sequence ID" value="NC_008525.1"/>
</dbReference>
<dbReference type="SMR" id="Q03FA3"/>
<dbReference type="STRING" id="278197.PEPE_1063"/>
<dbReference type="GeneID" id="33062988"/>
<dbReference type="KEGG" id="ppe:PEPE_1063"/>
<dbReference type="eggNOG" id="COG4479">
    <property type="taxonomic scope" value="Bacteria"/>
</dbReference>
<dbReference type="HOGENOM" id="CLU_177534_1_0_9"/>
<dbReference type="OrthoDB" id="2242851at2"/>
<dbReference type="Proteomes" id="UP000000773">
    <property type="component" value="Chromosome"/>
</dbReference>
<dbReference type="Gene3D" id="1.10.150.260">
    <property type="entry name" value="YozE SAM-like"/>
    <property type="match status" value="1"/>
</dbReference>
<dbReference type="HAMAP" id="MF_01538">
    <property type="entry name" value="UPF0346"/>
    <property type="match status" value="1"/>
</dbReference>
<dbReference type="InterPro" id="IPR010673">
    <property type="entry name" value="UPF0346"/>
</dbReference>
<dbReference type="InterPro" id="IPR023089">
    <property type="entry name" value="YozE_SAM-like"/>
</dbReference>
<dbReference type="InterPro" id="IPR036806">
    <property type="entry name" value="YozE_SAM-like_sf"/>
</dbReference>
<dbReference type="NCBIfam" id="NF010193">
    <property type="entry name" value="PRK13672.1"/>
    <property type="match status" value="1"/>
</dbReference>
<dbReference type="Pfam" id="PF06855">
    <property type="entry name" value="YozE_SAM_like"/>
    <property type="match status" value="1"/>
</dbReference>
<dbReference type="PIRSF" id="PIRSF037262">
    <property type="entry name" value="UCP037262"/>
    <property type="match status" value="1"/>
</dbReference>
<dbReference type="SUPFAM" id="SSF140652">
    <property type="entry name" value="YozE-like"/>
    <property type="match status" value="1"/>
</dbReference>
<organism>
    <name type="scientific">Pediococcus pentosaceus (strain ATCC 25745 / CCUG 21536 / LMG 10740 / 183-1w)</name>
    <dbReference type="NCBI Taxonomy" id="278197"/>
    <lineage>
        <taxon>Bacteria</taxon>
        <taxon>Bacillati</taxon>
        <taxon>Bacillota</taxon>
        <taxon>Bacilli</taxon>
        <taxon>Lactobacillales</taxon>
        <taxon>Lactobacillaceae</taxon>
        <taxon>Pediococcus</taxon>
    </lineage>
</organism>
<sequence>MKKSFFEYLMTQRNPQPNNEVEEFANQAFFDQVFPKQSRDFDEISKYLELNAGYLQSMSIFDSAWQRYLESEQF</sequence>
<name>Y1063_PEDPA</name>
<reference key="1">
    <citation type="journal article" date="2006" name="Proc. Natl. Acad. Sci. U.S.A.">
        <title>Comparative genomics of the lactic acid bacteria.</title>
        <authorList>
            <person name="Makarova K.S."/>
            <person name="Slesarev A."/>
            <person name="Wolf Y.I."/>
            <person name="Sorokin A."/>
            <person name="Mirkin B."/>
            <person name="Koonin E.V."/>
            <person name="Pavlov A."/>
            <person name="Pavlova N."/>
            <person name="Karamychev V."/>
            <person name="Polouchine N."/>
            <person name="Shakhova V."/>
            <person name="Grigoriev I."/>
            <person name="Lou Y."/>
            <person name="Rohksar D."/>
            <person name="Lucas S."/>
            <person name="Huang K."/>
            <person name="Goodstein D.M."/>
            <person name="Hawkins T."/>
            <person name="Plengvidhya V."/>
            <person name="Welker D."/>
            <person name="Hughes J."/>
            <person name="Goh Y."/>
            <person name="Benson A."/>
            <person name="Baldwin K."/>
            <person name="Lee J.-H."/>
            <person name="Diaz-Muniz I."/>
            <person name="Dosti B."/>
            <person name="Smeianov V."/>
            <person name="Wechter W."/>
            <person name="Barabote R."/>
            <person name="Lorca G."/>
            <person name="Altermann E."/>
            <person name="Barrangou R."/>
            <person name="Ganesan B."/>
            <person name="Xie Y."/>
            <person name="Rawsthorne H."/>
            <person name="Tamir D."/>
            <person name="Parker C."/>
            <person name="Breidt F."/>
            <person name="Broadbent J.R."/>
            <person name="Hutkins R."/>
            <person name="O'Sullivan D."/>
            <person name="Steele J."/>
            <person name="Unlu G."/>
            <person name="Saier M.H. Jr."/>
            <person name="Klaenhammer T."/>
            <person name="Richardson P."/>
            <person name="Kozyavkin S."/>
            <person name="Weimer B.C."/>
            <person name="Mills D.A."/>
        </authorList>
    </citation>
    <scope>NUCLEOTIDE SEQUENCE [LARGE SCALE GENOMIC DNA]</scope>
    <source>
        <strain>ATCC 25745 / CCUG 21536 / LMG 10740 / 183-1w</strain>
    </source>
</reference>
<comment type="similarity">
    <text evidence="1">Belongs to the UPF0346 family.</text>
</comment>
<gene>
    <name type="ordered locus">PEPE_1063</name>
</gene>